<protein>
    <recommendedName>
        <fullName>Protein sidekick homolog</fullName>
    </recommendedName>
    <alternativeName>
        <fullName>Neuronal IgCAM protein 4</fullName>
    </alternativeName>
</protein>
<name>SDK_CAEBR</name>
<gene>
    <name type="primary">rig-4</name>
    <name type="ORF">CBG17724</name>
</gene>
<dbReference type="EMBL" id="HE600976">
    <property type="protein sequence ID" value="CAP35231.1"/>
    <property type="molecule type" value="Genomic_DNA"/>
</dbReference>
<dbReference type="SMR" id="Q60ZN5"/>
<dbReference type="FunCoup" id="Q60ZN5">
    <property type="interactions" value="958"/>
</dbReference>
<dbReference type="STRING" id="6238.Q60ZN5"/>
<dbReference type="GlyCosmos" id="Q60ZN5">
    <property type="glycosylation" value="11 sites, No reported glycans"/>
</dbReference>
<dbReference type="EnsemblMetazoa" id="CBG17724.1">
    <property type="protein sequence ID" value="CBG17724.1"/>
    <property type="gene ID" value="WBGene00037279"/>
</dbReference>
<dbReference type="KEGG" id="cbr:CBG_17724"/>
<dbReference type="CTD" id="8576366"/>
<dbReference type="WormBase" id="CBG17724">
    <property type="protein sequence ID" value="CBP18995"/>
    <property type="gene ID" value="WBGene00037279"/>
    <property type="gene designation" value="Cbr-rig-4"/>
</dbReference>
<dbReference type="eggNOG" id="KOG3510">
    <property type="taxonomic scope" value="Eukaryota"/>
</dbReference>
<dbReference type="HOGENOM" id="CLU_001875_1_0_1"/>
<dbReference type="InParanoid" id="Q60ZN5"/>
<dbReference type="OMA" id="EWVVPHK"/>
<dbReference type="Proteomes" id="UP000008549">
    <property type="component" value="Unassembled WGS sequence"/>
</dbReference>
<dbReference type="GO" id="GO:0016020">
    <property type="term" value="C:membrane"/>
    <property type="evidence" value="ECO:0007669"/>
    <property type="project" value="UniProtKB-SubCell"/>
</dbReference>
<dbReference type="GO" id="GO:0045202">
    <property type="term" value="C:synapse"/>
    <property type="evidence" value="ECO:0000318"/>
    <property type="project" value="GO_Central"/>
</dbReference>
<dbReference type="GO" id="GO:0007156">
    <property type="term" value="P:homophilic cell adhesion via plasma membrane adhesion molecules"/>
    <property type="evidence" value="ECO:0000318"/>
    <property type="project" value="GO_Central"/>
</dbReference>
<dbReference type="GO" id="GO:0007416">
    <property type="term" value="P:synapse assembly"/>
    <property type="evidence" value="ECO:0000318"/>
    <property type="project" value="GO_Central"/>
</dbReference>
<dbReference type="CDD" id="cd00063">
    <property type="entry name" value="FN3"/>
    <property type="match status" value="12"/>
</dbReference>
<dbReference type="CDD" id="cd00096">
    <property type="entry name" value="Ig"/>
    <property type="match status" value="1"/>
</dbReference>
<dbReference type="FunFam" id="2.60.40.10:FF:002281">
    <property type="entry name" value="Protein sidekick homolog"/>
    <property type="match status" value="1"/>
</dbReference>
<dbReference type="FunFam" id="2.60.40.10:FF:002285">
    <property type="entry name" value="Protein sidekick homolog"/>
    <property type="match status" value="1"/>
</dbReference>
<dbReference type="FunFam" id="2.60.40.10:FF:002289">
    <property type="entry name" value="Protein sidekick homolog"/>
    <property type="match status" value="1"/>
</dbReference>
<dbReference type="FunFam" id="2.60.40.10:FF:002417">
    <property type="entry name" value="Protein sidekick homolog"/>
    <property type="match status" value="1"/>
</dbReference>
<dbReference type="FunFam" id="2.60.40.10:FF:002422">
    <property type="entry name" value="Protein sidekick homolog"/>
    <property type="match status" value="1"/>
</dbReference>
<dbReference type="FunFam" id="2.60.40.10:FF:002518">
    <property type="entry name" value="Protein sidekick homolog"/>
    <property type="match status" value="1"/>
</dbReference>
<dbReference type="FunFam" id="2.60.40.10:FF:002914">
    <property type="entry name" value="Protein sidekick homolog"/>
    <property type="match status" value="1"/>
</dbReference>
<dbReference type="FunFam" id="2.60.40.10:FF:003091">
    <property type="entry name" value="Protein sidekick homolog"/>
    <property type="match status" value="1"/>
</dbReference>
<dbReference type="FunFam" id="2.60.40.10:FF:000158">
    <property type="entry name" value="Sidekick cell adhesion molecule 2"/>
    <property type="match status" value="1"/>
</dbReference>
<dbReference type="FunFam" id="2.60.40.10:FF:001132">
    <property type="entry name" value="Sidekick, isoform B"/>
    <property type="match status" value="1"/>
</dbReference>
<dbReference type="Gene3D" id="2.60.40.10">
    <property type="entry name" value="Immunoglobulins"/>
    <property type="match status" value="17"/>
</dbReference>
<dbReference type="InterPro" id="IPR003961">
    <property type="entry name" value="FN3_dom"/>
</dbReference>
<dbReference type="InterPro" id="IPR036116">
    <property type="entry name" value="FN3_sf"/>
</dbReference>
<dbReference type="InterPro" id="IPR007110">
    <property type="entry name" value="Ig-like_dom"/>
</dbReference>
<dbReference type="InterPro" id="IPR036179">
    <property type="entry name" value="Ig-like_dom_sf"/>
</dbReference>
<dbReference type="InterPro" id="IPR013783">
    <property type="entry name" value="Ig-like_fold"/>
</dbReference>
<dbReference type="InterPro" id="IPR013098">
    <property type="entry name" value="Ig_I-set"/>
</dbReference>
<dbReference type="InterPro" id="IPR003599">
    <property type="entry name" value="Ig_sub"/>
</dbReference>
<dbReference type="InterPro" id="IPR003598">
    <property type="entry name" value="Ig_sub2"/>
</dbReference>
<dbReference type="InterPro" id="IPR050964">
    <property type="entry name" value="Striated_Muscle_Regulatory"/>
</dbReference>
<dbReference type="PANTHER" id="PTHR13817:SF166">
    <property type="entry name" value="NEURONAL IGCAM-RELATED"/>
    <property type="match status" value="1"/>
</dbReference>
<dbReference type="PANTHER" id="PTHR13817">
    <property type="entry name" value="TITIN"/>
    <property type="match status" value="1"/>
</dbReference>
<dbReference type="Pfam" id="PF00041">
    <property type="entry name" value="fn3"/>
    <property type="match status" value="9"/>
</dbReference>
<dbReference type="Pfam" id="PF07679">
    <property type="entry name" value="I-set"/>
    <property type="match status" value="2"/>
</dbReference>
<dbReference type="Pfam" id="PF13927">
    <property type="entry name" value="Ig_3"/>
    <property type="match status" value="1"/>
</dbReference>
<dbReference type="PRINTS" id="PR00014">
    <property type="entry name" value="FNTYPEIII"/>
</dbReference>
<dbReference type="SMART" id="SM00060">
    <property type="entry name" value="FN3"/>
    <property type="match status" value="13"/>
</dbReference>
<dbReference type="SMART" id="SM00409">
    <property type="entry name" value="IG"/>
    <property type="match status" value="4"/>
</dbReference>
<dbReference type="SMART" id="SM00408">
    <property type="entry name" value="IGc2"/>
    <property type="match status" value="4"/>
</dbReference>
<dbReference type="SUPFAM" id="SSF49265">
    <property type="entry name" value="Fibronectin type III"/>
    <property type="match status" value="7"/>
</dbReference>
<dbReference type="SUPFAM" id="SSF48726">
    <property type="entry name" value="Immunoglobulin"/>
    <property type="match status" value="4"/>
</dbReference>
<dbReference type="PROSITE" id="PS50853">
    <property type="entry name" value="FN3"/>
    <property type="match status" value="13"/>
</dbReference>
<dbReference type="PROSITE" id="PS50835">
    <property type="entry name" value="IG_LIKE"/>
    <property type="match status" value="5"/>
</dbReference>
<comment type="function">
    <text evidence="1">Cell adhesion protein.</text>
</comment>
<comment type="subcellular location">
    <subcellularLocation>
        <location evidence="6">Membrane</location>
        <topology evidence="6">Single-pass type I membrane protein</topology>
    </subcellularLocation>
</comment>
<comment type="similarity">
    <text evidence="6">Belongs to the sidekick family.</text>
</comment>
<accession>Q60ZN5</accession>
<accession>A8XRF7</accession>
<feature type="signal peptide" evidence="2">
    <location>
        <begin position="1"/>
        <end position="26"/>
    </location>
</feature>
<feature type="chain" id="PRO_0000226981" description="Protein sidekick homolog">
    <location>
        <begin position="27"/>
        <end position="2322"/>
    </location>
</feature>
<feature type="topological domain" description="Extracellular" evidence="2">
    <location>
        <begin position="27"/>
        <end position="2020"/>
    </location>
</feature>
<feature type="transmembrane region" description="Helical" evidence="2">
    <location>
        <begin position="2021"/>
        <end position="2041"/>
    </location>
</feature>
<feature type="topological domain" description="Cytoplasmic" evidence="2">
    <location>
        <begin position="2042"/>
        <end position="2322"/>
    </location>
</feature>
<feature type="domain" description="Ig-like C2-type 1">
    <location>
        <begin position="28"/>
        <end position="105"/>
    </location>
</feature>
<feature type="domain" description="Ig-like C2-type 2">
    <location>
        <begin position="217"/>
        <end position="319"/>
    </location>
</feature>
<feature type="domain" description="Ig-like C2-type 3">
    <location>
        <begin position="324"/>
        <end position="397"/>
    </location>
</feature>
<feature type="domain" description="Ig-like C2-type 4">
    <location>
        <begin position="450"/>
        <end position="545"/>
    </location>
</feature>
<feature type="domain" description="Ig-like C2-type 5">
    <location>
        <begin position="548"/>
        <end position="639"/>
    </location>
</feature>
<feature type="domain" description="Fibronectin type-III 1" evidence="4">
    <location>
        <begin position="646"/>
        <end position="752"/>
    </location>
</feature>
<feature type="domain" description="Fibronectin type-III 2" evidence="4">
    <location>
        <begin position="757"/>
        <end position="854"/>
    </location>
</feature>
<feature type="domain" description="Fibronectin type-III 3" evidence="4">
    <location>
        <begin position="859"/>
        <end position="958"/>
    </location>
</feature>
<feature type="domain" description="Fibronectin type-III 4" evidence="4">
    <location>
        <begin position="962"/>
        <end position="1056"/>
    </location>
</feature>
<feature type="domain" description="Fibronectin type-III 5" evidence="4">
    <location>
        <begin position="1060"/>
        <end position="1155"/>
    </location>
</feature>
<feature type="domain" description="Fibronectin type-III 6" evidence="4">
    <location>
        <begin position="1160"/>
        <end position="1255"/>
    </location>
</feature>
<feature type="domain" description="Fibronectin type-III 7" evidence="4">
    <location>
        <begin position="1260"/>
        <end position="1360"/>
    </location>
</feature>
<feature type="domain" description="Fibronectin type-III 8" evidence="4">
    <location>
        <begin position="1364"/>
        <end position="1458"/>
    </location>
</feature>
<feature type="domain" description="Fibronectin type-III 9" evidence="4">
    <location>
        <begin position="1464"/>
        <end position="1567"/>
    </location>
</feature>
<feature type="domain" description="Fibronectin type-III 10" evidence="4">
    <location>
        <begin position="1572"/>
        <end position="1672"/>
    </location>
</feature>
<feature type="domain" description="Fibronectin type-III 11" evidence="4">
    <location>
        <begin position="1674"/>
        <end position="1774"/>
    </location>
</feature>
<feature type="domain" description="Fibronectin type-III 12" evidence="4">
    <location>
        <begin position="1777"/>
        <end position="1873"/>
    </location>
</feature>
<feature type="domain" description="Fibronectin type-III 13" evidence="4">
    <location>
        <begin position="1908"/>
        <end position="2010"/>
    </location>
</feature>
<feature type="region of interest" description="Disordered" evidence="5">
    <location>
        <begin position="732"/>
        <end position="762"/>
    </location>
</feature>
<feature type="region of interest" description="Disordered" evidence="5">
    <location>
        <begin position="1040"/>
        <end position="1060"/>
    </location>
</feature>
<feature type="region of interest" description="Disordered" evidence="5">
    <location>
        <begin position="1139"/>
        <end position="1163"/>
    </location>
</feature>
<feature type="region of interest" description="Disordered" evidence="5">
    <location>
        <begin position="1916"/>
        <end position="1965"/>
    </location>
</feature>
<feature type="region of interest" description="Disordered" evidence="5">
    <location>
        <begin position="2081"/>
        <end position="2114"/>
    </location>
</feature>
<feature type="region of interest" description="Disordered" evidence="5">
    <location>
        <begin position="2167"/>
        <end position="2254"/>
    </location>
</feature>
<feature type="region of interest" description="Disordered" evidence="5">
    <location>
        <begin position="2276"/>
        <end position="2322"/>
    </location>
</feature>
<feature type="compositionally biased region" description="Basic and acidic residues" evidence="5">
    <location>
        <begin position="1040"/>
        <end position="1049"/>
    </location>
</feature>
<feature type="compositionally biased region" description="Polar residues" evidence="5">
    <location>
        <begin position="1146"/>
        <end position="1163"/>
    </location>
</feature>
<feature type="compositionally biased region" description="Low complexity" evidence="5">
    <location>
        <begin position="1935"/>
        <end position="1947"/>
    </location>
</feature>
<feature type="compositionally biased region" description="Polar residues" evidence="5">
    <location>
        <begin position="2092"/>
        <end position="2101"/>
    </location>
</feature>
<feature type="compositionally biased region" description="Low complexity" evidence="5">
    <location>
        <begin position="2207"/>
        <end position="2223"/>
    </location>
</feature>
<feature type="compositionally biased region" description="Acidic residues" evidence="5">
    <location>
        <begin position="2227"/>
        <end position="2238"/>
    </location>
</feature>
<feature type="compositionally biased region" description="Polar residues" evidence="5">
    <location>
        <begin position="2282"/>
        <end position="2302"/>
    </location>
</feature>
<feature type="compositionally biased region" description="Polar residues" evidence="5">
    <location>
        <begin position="2310"/>
        <end position="2322"/>
    </location>
</feature>
<feature type="glycosylation site" description="N-linked (GlcNAc...) asparagine" evidence="2">
    <location>
        <position position="408"/>
    </location>
</feature>
<feature type="glycosylation site" description="N-linked (GlcNAc...) asparagine" evidence="2">
    <location>
        <position position="633"/>
    </location>
</feature>
<feature type="glycosylation site" description="N-linked (GlcNAc...) asparagine" evidence="2">
    <location>
        <position position="656"/>
    </location>
</feature>
<feature type="glycosylation site" description="N-linked (GlcNAc...) asparagine" evidence="2">
    <location>
        <position position="808"/>
    </location>
</feature>
<feature type="glycosylation site" description="N-linked (GlcNAc...) asparagine" evidence="2">
    <location>
        <position position="869"/>
    </location>
</feature>
<feature type="glycosylation site" description="N-linked (GlcNAc...) asparagine" evidence="2">
    <location>
        <position position="933"/>
    </location>
</feature>
<feature type="glycosylation site" description="N-linked (GlcNAc...) asparagine" evidence="2">
    <location>
        <position position="1017"/>
    </location>
</feature>
<feature type="glycosylation site" description="N-linked (GlcNAc...) asparagine" evidence="2">
    <location>
        <position position="1108"/>
    </location>
</feature>
<feature type="glycosylation site" description="N-linked (GlcNAc...) asparagine" evidence="2">
    <location>
        <position position="1615"/>
    </location>
</feature>
<feature type="glycosylation site" description="N-linked (GlcNAc...) asparagine" evidence="2">
    <location>
        <position position="1677"/>
    </location>
</feature>
<feature type="glycosylation site" description="N-linked (GlcNAc...) asparagine" evidence="2">
    <location>
        <position position="1864"/>
    </location>
</feature>
<feature type="disulfide bond" evidence="3">
    <location>
        <begin position="52"/>
        <end position="94"/>
    </location>
</feature>
<feature type="disulfide bond" evidence="3">
    <location>
        <begin position="247"/>
        <end position="301"/>
    </location>
</feature>
<feature type="disulfide bond" evidence="3">
    <location>
        <begin position="345"/>
        <end position="386"/>
    </location>
</feature>
<feature type="disulfide bond" evidence="3">
    <location>
        <begin position="481"/>
        <end position="529"/>
    </location>
</feature>
<feature type="disulfide bond" evidence="3">
    <location>
        <begin position="569"/>
        <end position="623"/>
    </location>
</feature>
<proteinExistence type="inferred from homology"/>
<keyword id="KW-0130">Cell adhesion</keyword>
<keyword id="KW-1015">Disulfide bond</keyword>
<keyword id="KW-0325">Glycoprotein</keyword>
<keyword id="KW-0393">Immunoglobulin domain</keyword>
<keyword id="KW-0472">Membrane</keyword>
<keyword id="KW-1185">Reference proteome</keyword>
<keyword id="KW-0677">Repeat</keyword>
<keyword id="KW-0732">Signal</keyword>
<keyword id="KW-0812">Transmembrane</keyword>
<keyword id="KW-1133">Transmembrane helix</keyword>
<reference key="1">
    <citation type="journal article" date="2003" name="PLoS Biol.">
        <title>The genome sequence of Caenorhabditis briggsae: a platform for comparative genomics.</title>
        <authorList>
            <person name="Stein L.D."/>
            <person name="Bao Z."/>
            <person name="Blasiar D."/>
            <person name="Blumenthal T."/>
            <person name="Brent M.R."/>
            <person name="Chen N."/>
            <person name="Chinwalla A."/>
            <person name="Clarke L."/>
            <person name="Clee C."/>
            <person name="Coghlan A."/>
            <person name="Coulson A."/>
            <person name="D'Eustachio P."/>
            <person name="Fitch D.H.A."/>
            <person name="Fulton L.A."/>
            <person name="Fulton R.E."/>
            <person name="Griffiths-Jones S."/>
            <person name="Harris T.W."/>
            <person name="Hillier L.W."/>
            <person name="Kamath R."/>
            <person name="Kuwabara P.E."/>
            <person name="Mardis E.R."/>
            <person name="Marra M.A."/>
            <person name="Miner T.L."/>
            <person name="Minx P."/>
            <person name="Mullikin J.C."/>
            <person name="Plumb R.W."/>
            <person name="Rogers J."/>
            <person name="Schein J.E."/>
            <person name="Sohrmann M."/>
            <person name="Spieth J."/>
            <person name="Stajich J.E."/>
            <person name="Wei C."/>
            <person name="Willey D."/>
            <person name="Wilson R.K."/>
            <person name="Durbin R.M."/>
            <person name="Waterston R.H."/>
        </authorList>
    </citation>
    <scope>NUCLEOTIDE SEQUENCE [LARGE SCALE GENOMIC DNA]</scope>
    <source>
        <strain>AF16</strain>
    </source>
</reference>
<evidence type="ECO:0000250" key="1">
    <source>
        <dbReference type="UniProtKB" id="O97394"/>
    </source>
</evidence>
<evidence type="ECO:0000255" key="2"/>
<evidence type="ECO:0000255" key="3">
    <source>
        <dbReference type="PROSITE-ProRule" id="PRU00114"/>
    </source>
</evidence>
<evidence type="ECO:0000255" key="4">
    <source>
        <dbReference type="PROSITE-ProRule" id="PRU00316"/>
    </source>
</evidence>
<evidence type="ECO:0000256" key="5">
    <source>
        <dbReference type="SAM" id="MobiDB-lite"/>
    </source>
</evidence>
<evidence type="ECO:0000305" key="6"/>
<sequence length="2322" mass="258961">MNYRIFLLFCTTTVLWSVVSTQLVLGKPPIFQNTGPVEQKVAVEGEIVRLKCDDAELAEQYEWRVGDASGDLIAASRFAQVTVSRTNDNQKYRCVARNTVGAAISPPSVVRSKYLDDFDASDESAQYDVLAGIGRHFVLRTPRLLSSRNLDISYSWIKDDSNQVTPDATHFVTANGDLVVTSVKRDDFGTYKLMASSDDLKEIVSKEYIVKDNGMAPSLQNTLSIIYFSPERTIVESSMPHDEKFDCVTSFEAKDDVRIRWFLNGQPITGSEVGIKTTMNNRRLIISNPSGFTRGEHKLECRADAAMGRTSDQNSAYLTFISRPVLKDLPNEIHKKVGSSLTLKCGVKKKSSMDIKWYRNGLMMNTQRGKLTIDRIRQEDFGLYQCEAVNEAGADMSSVWVKEGDINNDTMVMGMSEDGRSLEEEISMETPPPRKLKFFDSSKSQEQLFPFTSDIESSQRLTKTPKDLTAASGTDKITLECAAAGSPPPHIVWFLNGNGIQTDSVKYDFSNGDLTIHDIRKSDEGEYTCEISGTDVKASANVQVNGDSLIEYGPADQKSLIGTNVEFSCEVAKEYARKATVEWYLNDALLPVNGNSGLRISRNRKGSLIIRQVGPDNTGEYRCRVTVDGREENASAMLQIIEKPAMPERVRAELHNETMPAKVRVRWNEGFDGNEPIIKHAIEIRTMGPTGLWSDWTTAIDNIPKDDGKPCCWADIEDLRPSSTAEFRVVASNKHGPGKPSLPSSSVTMPQQPPSAAPRNVAASARSPHSVMVQWQQPKEEQDSGDFLGYVVRYRLAGYSSLTWNEKNLTTKDARNTLVDELITWREYEIQVAAYNKRGLGVFSESIEVTTAEGRPTQAPKNVRVKVLNSTAVSLEFTAPEQQRIPGVNLGYKVQFWKGEPEKGELYKQVILDPDRRQLSTVVNELEKFGHYNLTVLCFTTPGDGPKSNILRVVTEEDTPEAVDELSIAEVMYNGAVLTWNPPMKENGIVTKYTIRHWASSSPDVKTKHEVDGSTTNITIDGLQPSTRYGVDVMASTKKGDGPVEETKFESGVPPELPGRPSMLSIGDISATTVQLHFTPGFDGHTAIRQWIVEGKMADSSVFAHIFNVSSPKARSIIVTGLRPFTQYQLRLIAENVKGRGAPSEPSRTFETLQTNPETPSQRLFTEPVSATSISVSWTPLLATHWNGQPKGYLIVYREVDEDNWKEVRTPALRSSEHTVTDLRPFTTYEVNVFSENVFGRSLPTDAVKARTYESVPSGSPRNIVVTAEGSKSAIVKWDPVAELSTNGDVIGYKLRVVPERESLMADETREIDVPGQSTLMTKVSNLRPFTSYYVYMSAYTIVGNGPENSTPLSFETLEDVPAPPESFQCSQISEQDVRMKWLPPGSPNGKITNYVISYWKSHEPRSMAIDAQVAGNLLMFSAMSLSPNTQYTFAIKAKNSKGESEEAVAEVMTSSVRLPVRNAPAPVRDTTSQHLATEITIRWDESLPRKLTEDAESPVRAVQVSYQKTNEDEWLTLEKKFEYSKRRAVIKHLSPNSMFRFRIRFIGDFLESSWSPESEWMRTLPSAPFAQPISLKATPYERNSVQLEWVVPHKSTWNSDAIGYRIHYREYPSNETWQMEEIAVHDPHEDREEKVLAKLSTFRHYIIRMRLFNSEGEGPFSAPVFVYVGYSIPKRNLTNIITEPLSSSSIRVKWDAWPKEDSETVTSFKVRYVPVASVLSSVSSEEEVMIVDTNECILSDLRKFAEYQISVSPYNRAGEGKMSQVREKTLEDKPGPVGVLRFSDVLMDSVKVSWDEPAQPNGMVIGYIVNYKGYRMQEEFKNEDQQRTSRNYFDSHGLAEGVTYFFSVWAETSAGKGELRSANVTIGPSKDGPLPPSKPQITSGQSYVTLSWNDVANSDEIVGHLLQAKRVSVAEETENGYVSQRPRRNEIRGAKSAAQTSASSNSNRPTHPIGEWITLRPTDGKSEKEQVSYRELQPSSFYVFRVFTRNVRGIGRASPETEQLFVPESIPDDPFYTTWWFMALVAMAAFVLIVIIIAILCVTGSSAKYRREKRSRSIDSLQLADGNFASFQLKGTSAANMTRSRELPTRPGTTQSWLSDQSREPPAYGSVLGDGRNNGGVMNMYGLATDVIPPLPNSGPPHASLEAMQKLSALVGRDIRSQNTAYVVSSSARGSDNERNEYMPTRSDLYGTRSEYGRVEYRGHIPSSSGGSQPQGSPQQQQEPYDSFDEEDDVDDDTVIRGDRTMTDGADDIARHYGSTDQYRDTWRKVRDTDMVRAPILTNQQPSSAAGRSSTTDSTSEGPWANIPATPNLTAGFSSFV</sequence>
<organism>
    <name type="scientific">Caenorhabditis briggsae</name>
    <dbReference type="NCBI Taxonomy" id="6238"/>
    <lineage>
        <taxon>Eukaryota</taxon>
        <taxon>Metazoa</taxon>
        <taxon>Ecdysozoa</taxon>
        <taxon>Nematoda</taxon>
        <taxon>Chromadorea</taxon>
        <taxon>Rhabditida</taxon>
        <taxon>Rhabditina</taxon>
        <taxon>Rhabditomorpha</taxon>
        <taxon>Rhabditoidea</taxon>
        <taxon>Rhabditidae</taxon>
        <taxon>Peloderinae</taxon>
        <taxon>Caenorhabditis</taxon>
    </lineage>
</organism>